<protein>
    <recommendedName>
        <fullName evidence="1">Large ribosomal subunit protein uL22</fullName>
    </recommendedName>
    <alternativeName>
        <fullName evidence="2">50S ribosomal protein L22</fullName>
    </alternativeName>
</protein>
<sequence>MATETFARLRFARISPQKCRLVADQIRGMPVERALQELTFSPKKGAAIVKKVLESAIANAEHNEGADVDELKVSQIYIDQGPTLKRIHARAKGRANRILKRTSHITVAVGEKVKG</sequence>
<gene>
    <name evidence="1" type="primary">rplV</name>
    <name type="ordered locus">Tgr7_2319</name>
</gene>
<reference key="1">
    <citation type="journal article" date="2011" name="Stand. Genomic Sci.">
        <title>Complete genome sequence of 'Thioalkalivibrio sulfidophilus' HL-EbGr7.</title>
        <authorList>
            <person name="Muyzer G."/>
            <person name="Sorokin D.Y."/>
            <person name="Mavromatis K."/>
            <person name="Lapidus A."/>
            <person name="Clum A."/>
            <person name="Ivanova N."/>
            <person name="Pati A."/>
            <person name="d'Haeseleer P."/>
            <person name="Woyke T."/>
            <person name="Kyrpides N.C."/>
        </authorList>
    </citation>
    <scope>NUCLEOTIDE SEQUENCE [LARGE SCALE GENOMIC DNA]</scope>
    <source>
        <strain>HL-EbGR7</strain>
    </source>
</reference>
<feature type="chain" id="PRO_1000166092" description="Large ribosomal subunit protein uL22">
    <location>
        <begin position="1"/>
        <end position="115"/>
    </location>
</feature>
<evidence type="ECO:0000255" key="1">
    <source>
        <dbReference type="HAMAP-Rule" id="MF_01331"/>
    </source>
</evidence>
<evidence type="ECO:0000305" key="2"/>
<organism>
    <name type="scientific">Thioalkalivibrio sulfidiphilus (strain HL-EbGR7)</name>
    <dbReference type="NCBI Taxonomy" id="396588"/>
    <lineage>
        <taxon>Bacteria</taxon>
        <taxon>Pseudomonadati</taxon>
        <taxon>Pseudomonadota</taxon>
        <taxon>Gammaproteobacteria</taxon>
        <taxon>Chromatiales</taxon>
        <taxon>Ectothiorhodospiraceae</taxon>
        <taxon>Thioalkalivibrio</taxon>
    </lineage>
</organism>
<proteinExistence type="inferred from homology"/>
<comment type="function">
    <text evidence="1">This protein binds specifically to 23S rRNA; its binding is stimulated by other ribosomal proteins, e.g. L4, L17, and L20. It is important during the early stages of 50S assembly. It makes multiple contacts with different domains of the 23S rRNA in the assembled 50S subunit and ribosome (By similarity).</text>
</comment>
<comment type="function">
    <text evidence="1">The globular domain of the protein is located near the polypeptide exit tunnel on the outside of the subunit, while an extended beta-hairpin is found that lines the wall of the exit tunnel in the center of the 70S ribosome.</text>
</comment>
<comment type="subunit">
    <text evidence="1">Part of the 50S ribosomal subunit.</text>
</comment>
<comment type="similarity">
    <text evidence="1">Belongs to the universal ribosomal protein uL22 family.</text>
</comment>
<dbReference type="EMBL" id="CP001339">
    <property type="protein sequence ID" value="ACL73399.1"/>
    <property type="molecule type" value="Genomic_DNA"/>
</dbReference>
<dbReference type="RefSeq" id="WP_012638875.1">
    <property type="nucleotide sequence ID" value="NC_011901.1"/>
</dbReference>
<dbReference type="SMR" id="B8GV53"/>
<dbReference type="STRING" id="396588.Tgr7_2319"/>
<dbReference type="KEGG" id="tgr:Tgr7_2319"/>
<dbReference type="eggNOG" id="COG0091">
    <property type="taxonomic scope" value="Bacteria"/>
</dbReference>
<dbReference type="HOGENOM" id="CLU_083987_3_3_6"/>
<dbReference type="OrthoDB" id="9805969at2"/>
<dbReference type="Proteomes" id="UP000002383">
    <property type="component" value="Chromosome"/>
</dbReference>
<dbReference type="GO" id="GO:0022625">
    <property type="term" value="C:cytosolic large ribosomal subunit"/>
    <property type="evidence" value="ECO:0007669"/>
    <property type="project" value="TreeGrafter"/>
</dbReference>
<dbReference type="GO" id="GO:0019843">
    <property type="term" value="F:rRNA binding"/>
    <property type="evidence" value="ECO:0007669"/>
    <property type="project" value="UniProtKB-UniRule"/>
</dbReference>
<dbReference type="GO" id="GO:0003735">
    <property type="term" value="F:structural constituent of ribosome"/>
    <property type="evidence" value="ECO:0007669"/>
    <property type="project" value="InterPro"/>
</dbReference>
<dbReference type="GO" id="GO:0006412">
    <property type="term" value="P:translation"/>
    <property type="evidence" value="ECO:0007669"/>
    <property type="project" value="UniProtKB-UniRule"/>
</dbReference>
<dbReference type="CDD" id="cd00336">
    <property type="entry name" value="Ribosomal_L22"/>
    <property type="match status" value="1"/>
</dbReference>
<dbReference type="FunFam" id="3.90.470.10:FF:000001">
    <property type="entry name" value="50S ribosomal protein L22"/>
    <property type="match status" value="1"/>
</dbReference>
<dbReference type="Gene3D" id="3.90.470.10">
    <property type="entry name" value="Ribosomal protein L22/L17"/>
    <property type="match status" value="1"/>
</dbReference>
<dbReference type="HAMAP" id="MF_01331_B">
    <property type="entry name" value="Ribosomal_uL22_B"/>
    <property type="match status" value="1"/>
</dbReference>
<dbReference type="InterPro" id="IPR001063">
    <property type="entry name" value="Ribosomal_uL22"/>
</dbReference>
<dbReference type="InterPro" id="IPR005727">
    <property type="entry name" value="Ribosomal_uL22_bac/chlpt-type"/>
</dbReference>
<dbReference type="InterPro" id="IPR047867">
    <property type="entry name" value="Ribosomal_uL22_bac/org-type"/>
</dbReference>
<dbReference type="InterPro" id="IPR018260">
    <property type="entry name" value="Ribosomal_uL22_CS"/>
</dbReference>
<dbReference type="InterPro" id="IPR036394">
    <property type="entry name" value="Ribosomal_uL22_sf"/>
</dbReference>
<dbReference type="NCBIfam" id="TIGR01044">
    <property type="entry name" value="rplV_bact"/>
    <property type="match status" value="1"/>
</dbReference>
<dbReference type="PANTHER" id="PTHR13501">
    <property type="entry name" value="CHLOROPLAST 50S RIBOSOMAL PROTEIN L22-RELATED"/>
    <property type="match status" value="1"/>
</dbReference>
<dbReference type="PANTHER" id="PTHR13501:SF8">
    <property type="entry name" value="LARGE RIBOSOMAL SUBUNIT PROTEIN UL22M"/>
    <property type="match status" value="1"/>
</dbReference>
<dbReference type="Pfam" id="PF00237">
    <property type="entry name" value="Ribosomal_L22"/>
    <property type="match status" value="1"/>
</dbReference>
<dbReference type="SUPFAM" id="SSF54843">
    <property type="entry name" value="Ribosomal protein L22"/>
    <property type="match status" value="1"/>
</dbReference>
<dbReference type="PROSITE" id="PS00464">
    <property type="entry name" value="RIBOSOMAL_L22"/>
    <property type="match status" value="1"/>
</dbReference>
<keyword id="KW-1185">Reference proteome</keyword>
<keyword id="KW-0687">Ribonucleoprotein</keyword>
<keyword id="KW-0689">Ribosomal protein</keyword>
<keyword id="KW-0694">RNA-binding</keyword>
<keyword id="KW-0699">rRNA-binding</keyword>
<name>RL22_THISH</name>
<accession>B8GV53</accession>